<dbReference type="EC" id="2.3.2.6" evidence="1"/>
<dbReference type="EMBL" id="CP001087">
    <property type="protein sequence ID" value="ACN15762.1"/>
    <property type="molecule type" value="Genomic_DNA"/>
</dbReference>
<dbReference type="RefSeq" id="WP_015904525.1">
    <property type="nucleotide sequence ID" value="NC_012108.1"/>
</dbReference>
<dbReference type="SMR" id="C0QI26"/>
<dbReference type="STRING" id="177437.HRM2_26680"/>
<dbReference type="KEGG" id="dat:HRM2_26680"/>
<dbReference type="eggNOG" id="COG2360">
    <property type="taxonomic scope" value="Bacteria"/>
</dbReference>
<dbReference type="HOGENOM" id="CLU_075045_0_0_7"/>
<dbReference type="OrthoDB" id="9790282at2"/>
<dbReference type="Proteomes" id="UP000000442">
    <property type="component" value="Chromosome"/>
</dbReference>
<dbReference type="GO" id="GO:0005737">
    <property type="term" value="C:cytoplasm"/>
    <property type="evidence" value="ECO:0007669"/>
    <property type="project" value="UniProtKB-SubCell"/>
</dbReference>
<dbReference type="GO" id="GO:0008914">
    <property type="term" value="F:leucyl-tRNA--protein transferase activity"/>
    <property type="evidence" value="ECO:0007669"/>
    <property type="project" value="UniProtKB-UniRule"/>
</dbReference>
<dbReference type="GO" id="GO:0030163">
    <property type="term" value="P:protein catabolic process"/>
    <property type="evidence" value="ECO:0007669"/>
    <property type="project" value="UniProtKB-UniRule"/>
</dbReference>
<dbReference type="FunFam" id="3.30.70.3550:FF:000001">
    <property type="entry name" value="Leucyl/phenylalanyl-tRNA--protein transferase"/>
    <property type="match status" value="1"/>
</dbReference>
<dbReference type="FunFam" id="3.40.630.70:FF:000001">
    <property type="entry name" value="Leucyl/phenylalanyl-tRNA--protein transferase"/>
    <property type="match status" value="1"/>
</dbReference>
<dbReference type="Gene3D" id="3.40.630.70">
    <property type="entry name" value="Leucyl/phenylalanyl-tRNA-protein transferase, C-terminal domain"/>
    <property type="match status" value="1"/>
</dbReference>
<dbReference type="Gene3D" id="3.30.70.3550">
    <property type="entry name" value="Leucyl/phenylalanyl-tRNA-protein transferase, N-terminal domain"/>
    <property type="match status" value="1"/>
</dbReference>
<dbReference type="HAMAP" id="MF_00688">
    <property type="entry name" value="Leu_Phe_trans"/>
    <property type="match status" value="1"/>
</dbReference>
<dbReference type="InterPro" id="IPR016181">
    <property type="entry name" value="Acyl_CoA_acyltransferase"/>
</dbReference>
<dbReference type="InterPro" id="IPR004616">
    <property type="entry name" value="Leu/Phe-tRNA_Trfase"/>
</dbReference>
<dbReference type="InterPro" id="IPR042203">
    <property type="entry name" value="Leu/Phe-tRNA_Trfase_C"/>
</dbReference>
<dbReference type="InterPro" id="IPR042221">
    <property type="entry name" value="Leu/Phe-tRNA_Trfase_N"/>
</dbReference>
<dbReference type="NCBIfam" id="TIGR00667">
    <property type="entry name" value="aat"/>
    <property type="match status" value="1"/>
</dbReference>
<dbReference type="PANTHER" id="PTHR30098">
    <property type="entry name" value="LEUCYL/PHENYLALANYL-TRNA--PROTEIN TRANSFERASE"/>
    <property type="match status" value="1"/>
</dbReference>
<dbReference type="PANTHER" id="PTHR30098:SF2">
    <property type="entry name" value="LEUCYL_PHENYLALANYL-TRNA--PROTEIN TRANSFERASE"/>
    <property type="match status" value="1"/>
</dbReference>
<dbReference type="Pfam" id="PF03588">
    <property type="entry name" value="Leu_Phe_trans"/>
    <property type="match status" value="1"/>
</dbReference>
<dbReference type="SUPFAM" id="SSF55729">
    <property type="entry name" value="Acyl-CoA N-acyltransferases (Nat)"/>
    <property type="match status" value="1"/>
</dbReference>
<reference key="1">
    <citation type="journal article" date="2009" name="Environ. Microbiol.">
        <title>Genome sequence of Desulfobacterium autotrophicum HRM2, a marine sulfate reducer oxidizing organic carbon completely to carbon dioxide.</title>
        <authorList>
            <person name="Strittmatter A.W."/>
            <person name="Liesegang H."/>
            <person name="Rabus R."/>
            <person name="Decker I."/>
            <person name="Amann J."/>
            <person name="Andres S."/>
            <person name="Henne A."/>
            <person name="Fricke W.F."/>
            <person name="Martinez-Arias R."/>
            <person name="Bartels D."/>
            <person name="Goesmann A."/>
            <person name="Krause L."/>
            <person name="Puehler A."/>
            <person name="Klenk H.P."/>
            <person name="Richter M."/>
            <person name="Schuler M."/>
            <person name="Gloeckner F.O."/>
            <person name="Meyerdierks A."/>
            <person name="Gottschalk G."/>
            <person name="Amann R."/>
        </authorList>
    </citation>
    <scope>NUCLEOTIDE SEQUENCE [LARGE SCALE GENOMIC DNA]</scope>
    <source>
        <strain>ATCC 43914 / DSM 3382 / VKM B-1955 / HRM2</strain>
    </source>
</reference>
<feature type="chain" id="PRO_1000212566" description="Leucyl/phenylalanyl-tRNA--protein transferase">
    <location>
        <begin position="1"/>
        <end position="229"/>
    </location>
</feature>
<proteinExistence type="inferred from homology"/>
<sequence length="229" mass="25602">MPVFRLSDRLVFPSPHLARHDGLLCLGGDLTPERILLAYQNGIFPWFSPGDPLLWWSPDPRLVILPGQLRVSRSLQKRINRNVYTITMDQAFGRVINACADLRNRSGQGTWLVQEMIEAYIGLHERGYAHSVEAWNAGTLAGGLYGISLGGCFFGESMFSTMADSSKTALAALDRHLVKQKFDLIDCQVKTDHLVSMGGVEIPRKDFLTRIHGSLEKKTIKGPWIFTGF</sequence>
<gene>
    <name evidence="1" type="primary">aat</name>
    <name type="ordered locus">HRM2_26680</name>
</gene>
<comment type="function">
    <text evidence="1">Functions in the N-end rule pathway of protein degradation where it conjugates Leu, Phe and, less efficiently, Met from aminoacyl-tRNAs to the N-termini of proteins containing an N-terminal arginine or lysine.</text>
</comment>
<comment type="catalytic activity">
    <reaction evidence="1">
        <text>N-terminal L-lysyl-[protein] + L-leucyl-tRNA(Leu) = N-terminal L-leucyl-L-lysyl-[protein] + tRNA(Leu) + H(+)</text>
        <dbReference type="Rhea" id="RHEA:12340"/>
        <dbReference type="Rhea" id="RHEA-COMP:9613"/>
        <dbReference type="Rhea" id="RHEA-COMP:9622"/>
        <dbReference type="Rhea" id="RHEA-COMP:12670"/>
        <dbReference type="Rhea" id="RHEA-COMP:12671"/>
        <dbReference type="ChEBI" id="CHEBI:15378"/>
        <dbReference type="ChEBI" id="CHEBI:65249"/>
        <dbReference type="ChEBI" id="CHEBI:78442"/>
        <dbReference type="ChEBI" id="CHEBI:78494"/>
        <dbReference type="ChEBI" id="CHEBI:133043"/>
        <dbReference type="EC" id="2.3.2.6"/>
    </reaction>
</comment>
<comment type="catalytic activity">
    <reaction evidence="1">
        <text>N-terminal L-arginyl-[protein] + L-leucyl-tRNA(Leu) = N-terminal L-leucyl-L-arginyl-[protein] + tRNA(Leu) + H(+)</text>
        <dbReference type="Rhea" id="RHEA:50416"/>
        <dbReference type="Rhea" id="RHEA-COMP:9613"/>
        <dbReference type="Rhea" id="RHEA-COMP:9622"/>
        <dbReference type="Rhea" id="RHEA-COMP:12672"/>
        <dbReference type="Rhea" id="RHEA-COMP:12673"/>
        <dbReference type="ChEBI" id="CHEBI:15378"/>
        <dbReference type="ChEBI" id="CHEBI:64719"/>
        <dbReference type="ChEBI" id="CHEBI:78442"/>
        <dbReference type="ChEBI" id="CHEBI:78494"/>
        <dbReference type="ChEBI" id="CHEBI:133044"/>
        <dbReference type="EC" id="2.3.2.6"/>
    </reaction>
</comment>
<comment type="catalytic activity">
    <reaction evidence="1">
        <text>L-phenylalanyl-tRNA(Phe) + an N-terminal L-alpha-aminoacyl-[protein] = an N-terminal L-phenylalanyl-L-alpha-aminoacyl-[protein] + tRNA(Phe)</text>
        <dbReference type="Rhea" id="RHEA:43632"/>
        <dbReference type="Rhea" id="RHEA-COMP:9668"/>
        <dbReference type="Rhea" id="RHEA-COMP:9699"/>
        <dbReference type="Rhea" id="RHEA-COMP:10636"/>
        <dbReference type="Rhea" id="RHEA-COMP:10637"/>
        <dbReference type="ChEBI" id="CHEBI:78442"/>
        <dbReference type="ChEBI" id="CHEBI:78531"/>
        <dbReference type="ChEBI" id="CHEBI:78597"/>
        <dbReference type="ChEBI" id="CHEBI:83561"/>
        <dbReference type="EC" id="2.3.2.6"/>
    </reaction>
</comment>
<comment type="subcellular location">
    <subcellularLocation>
        <location evidence="1">Cytoplasm</location>
    </subcellularLocation>
</comment>
<comment type="similarity">
    <text evidence="1">Belongs to the L/F-transferase family.</text>
</comment>
<evidence type="ECO:0000255" key="1">
    <source>
        <dbReference type="HAMAP-Rule" id="MF_00688"/>
    </source>
</evidence>
<keyword id="KW-0012">Acyltransferase</keyword>
<keyword id="KW-0963">Cytoplasm</keyword>
<keyword id="KW-1185">Reference proteome</keyword>
<keyword id="KW-0808">Transferase</keyword>
<protein>
    <recommendedName>
        <fullName evidence="1">Leucyl/phenylalanyl-tRNA--protein transferase</fullName>
        <ecNumber evidence="1">2.3.2.6</ecNumber>
    </recommendedName>
    <alternativeName>
        <fullName evidence="1">L/F-transferase</fullName>
    </alternativeName>
    <alternativeName>
        <fullName evidence="1">Leucyltransferase</fullName>
    </alternativeName>
    <alternativeName>
        <fullName evidence="1">Phenyalanyltransferase</fullName>
    </alternativeName>
</protein>
<accession>C0QI26</accession>
<organism>
    <name type="scientific">Desulforapulum autotrophicum (strain ATCC 43914 / DSM 3382 / VKM B-1955 / HRM2)</name>
    <name type="common">Desulfobacterium autotrophicum</name>
    <dbReference type="NCBI Taxonomy" id="177437"/>
    <lineage>
        <taxon>Bacteria</taxon>
        <taxon>Pseudomonadati</taxon>
        <taxon>Thermodesulfobacteriota</taxon>
        <taxon>Desulfobacteria</taxon>
        <taxon>Desulfobacterales</taxon>
        <taxon>Desulfobacteraceae</taxon>
        <taxon>Desulforapulum</taxon>
    </lineage>
</organism>
<name>LFTR_DESAH</name>